<protein>
    <recommendedName>
        <fullName evidence="1">Carbamoyl phosphate synthase large chain</fullName>
        <ecNumber evidence="1">6.3.4.16</ecNumber>
        <ecNumber evidence="1">6.3.5.5</ecNumber>
    </recommendedName>
    <alternativeName>
        <fullName evidence="1">Carbamoyl phosphate synthetase ammonia chain</fullName>
    </alternativeName>
</protein>
<evidence type="ECO:0000255" key="1">
    <source>
        <dbReference type="HAMAP-Rule" id="MF_01210"/>
    </source>
</evidence>
<comment type="function">
    <text evidence="1">Large subunit of the glutamine-dependent carbamoyl phosphate synthetase (CPSase). CPSase catalyzes the formation of carbamoyl phosphate from the ammonia moiety of glutamine, carbonate, and phosphate donated by ATP, constituting the first step of 2 biosynthetic pathways, one leading to arginine and/or urea and the other to pyrimidine nucleotides. The large subunit (synthetase) binds the substrates ammonia (free or transferred from glutamine from the small subunit), hydrogencarbonate and ATP and carries out an ATP-coupled ligase reaction, activating hydrogencarbonate by forming carboxy phosphate which reacts with ammonia to form carbamoyl phosphate.</text>
</comment>
<comment type="catalytic activity">
    <reaction evidence="1">
        <text>hydrogencarbonate + L-glutamine + 2 ATP + H2O = carbamoyl phosphate + L-glutamate + 2 ADP + phosphate + 2 H(+)</text>
        <dbReference type="Rhea" id="RHEA:18633"/>
        <dbReference type="ChEBI" id="CHEBI:15377"/>
        <dbReference type="ChEBI" id="CHEBI:15378"/>
        <dbReference type="ChEBI" id="CHEBI:17544"/>
        <dbReference type="ChEBI" id="CHEBI:29985"/>
        <dbReference type="ChEBI" id="CHEBI:30616"/>
        <dbReference type="ChEBI" id="CHEBI:43474"/>
        <dbReference type="ChEBI" id="CHEBI:58228"/>
        <dbReference type="ChEBI" id="CHEBI:58359"/>
        <dbReference type="ChEBI" id="CHEBI:456216"/>
        <dbReference type="EC" id="6.3.5.5"/>
    </reaction>
</comment>
<comment type="catalytic activity">
    <molecule>Carbamoyl phosphate synthase large chain</molecule>
    <reaction evidence="1">
        <text>hydrogencarbonate + NH4(+) + 2 ATP = carbamoyl phosphate + 2 ADP + phosphate + 2 H(+)</text>
        <dbReference type="Rhea" id="RHEA:18029"/>
        <dbReference type="ChEBI" id="CHEBI:15378"/>
        <dbReference type="ChEBI" id="CHEBI:17544"/>
        <dbReference type="ChEBI" id="CHEBI:28938"/>
        <dbReference type="ChEBI" id="CHEBI:30616"/>
        <dbReference type="ChEBI" id="CHEBI:43474"/>
        <dbReference type="ChEBI" id="CHEBI:58228"/>
        <dbReference type="ChEBI" id="CHEBI:456216"/>
        <dbReference type="EC" id="6.3.4.16"/>
    </reaction>
</comment>
<comment type="cofactor">
    <cofactor evidence="1">
        <name>Mg(2+)</name>
        <dbReference type="ChEBI" id="CHEBI:18420"/>
    </cofactor>
    <cofactor evidence="1">
        <name>Mn(2+)</name>
        <dbReference type="ChEBI" id="CHEBI:29035"/>
    </cofactor>
    <text evidence="1">Binds 4 Mg(2+) or Mn(2+) ions per subunit.</text>
</comment>
<comment type="pathway">
    <text evidence="1">Amino-acid biosynthesis; L-arginine biosynthesis; carbamoyl phosphate from bicarbonate: step 1/1.</text>
</comment>
<comment type="pathway">
    <text evidence="1">Pyrimidine metabolism; UMP biosynthesis via de novo pathway; (S)-dihydroorotate from bicarbonate: step 1/3.</text>
</comment>
<comment type="subunit">
    <text evidence="1">Composed of two chains; the small (or glutamine) chain promotes the hydrolysis of glutamine to ammonia, which is used by the large (or ammonia) chain to synthesize carbamoyl phosphate. Tetramer of heterodimers (alpha,beta)4.</text>
</comment>
<comment type="domain">
    <text evidence="1">The large subunit is composed of 2 ATP-grasp domains that are involved in binding the 2 ATP molecules needed for carbamoyl phosphate synthesis. The N-terminal ATP-grasp domain (referred to as the carboxyphosphate synthetic component) catalyzes the ATP-dependent phosphorylation of hydrogencarbonate to carboxyphosphate and the subsequent nucleophilic attack by ammonia to form a carbamate intermediate. The C-terminal ATP-grasp domain (referred to as the carbamoyl phosphate synthetic component) then catalyzes the phosphorylation of carbamate with the second ATP to form the end product carbamoyl phosphate. The reactive and unstable enzyme intermediates are sequentially channeled from one active site to the next through the interior of the protein over a distance of at least 96 A.</text>
</comment>
<comment type="similarity">
    <text evidence="1">Belongs to the CarB family.</text>
</comment>
<sequence>MPKRLDINTILVIGSGPIVIGQAAEFDYSGTQACQSLKEEGYKVILVNSNPATIMTDTATADKVYIEPLTLEFVSRIIRKERPDAILPTLGGQTGLNMAVELAKSGVLEECGVEILGTKLSAIEQAEDRDLFRTLMQDLNEPTPPSEIIHNLDEAYGFVNEIGYPVIVRPAFTLGGTGGGICHNEEELIEIVTSGLKHSPVTQCLLEKSIAGCKEIEYEVMRDSNDNAIVVCNMENIDPVGVHTGDSIVVAPSQTLSDREYQMLRNTSLRIIRALGIEGGCNVQLALDPYSFQYYVIEVNPRVSRSSALASKATGYPIAKLAAKIAVGLTLDEIVNPVTQKTYACFEPALDYVVSKIPRWPFDKFESANRTLGTQMKATGEVMSIGRNLEESLLKAVRSLELGIYHLELDHLKELDKETMKKRIIKADDERLFIVAEAIRQGVTKEEINEWCEMDFFFLQKVENIVNMEREVKANVGNMEVLQTAKEMGFSDHYIAAAWNKTEREIYDMRKENNMTPVFKMVDTCAAEFESATPYYYSTYADENESIVTDRKSVVVLGSGPIRIGQGVEFDYATVHSVWAIKEAGYEAIIINNNPETVSTDFSISDKLYFEPLTIEDVMHIIDLEKPEGVIVQFGGQTAINLAAKLEEHGVKILGTSLEDLDRAEDRDKFEAALTKLGIPQPVGKTATTVEQAVAIAEEIGYPVLVRPSYVLGGRAMEIVYRQEELLHYMKNAVKVHADHPVLIDRYMVGKEIEVDAISDGENVFIPGIMEHIERAGVHSGDSIGVYPPQSLSEKLKEQIIEHTIALGKGLNIVGLLNIQFVVFKDQVYVIEVNPRASRTVPFLSKITGVPMANVATKVILGQNLVEQGYGTGYHPEEKEVYVKAPVFSFAKLRSVDTTLGPEMKSTGEVMGKDLTLEKALYKGLVASGINIPTHGSVIITVADKDKEEAMEIAKRFHEIGYNLLATAGTAQSLAEQNIPVQVVNKIDSEEYNLLDIIRQGKAQFVINTLTKGKQPARDGFRIRRESVENGVACLTSLDTTRAILRVLESMTFSAHSMKEITQTKRHEVVHA</sequence>
<feature type="chain" id="PRO_1000138883" description="Carbamoyl phosphate synthase large chain">
    <location>
        <begin position="1"/>
        <end position="1072"/>
    </location>
</feature>
<feature type="domain" description="ATP-grasp 1" evidence="1">
    <location>
        <begin position="133"/>
        <end position="327"/>
    </location>
</feature>
<feature type="domain" description="ATP-grasp 2" evidence="1">
    <location>
        <begin position="671"/>
        <end position="861"/>
    </location>
</feature>
<feature type="domain" description="MGS-like" evidence="1">
    <location>
        <begin position="930"/>
        <end position="1072"/>
    </location>
</feature>
<feature type="region of interest" description="Carboxyphosphate synthetic domain" evidence="1">
    <location>
        <begin position="1"/>
        <end position="401"/>
    </location>
</feature>
<feature type="region of interest" description="Oligomerization domain" evidence="1">
    <location>
        <begin position="402"/>
        <end position="546"/>
    </location>
</feature>
<feature type="region of interest" description="Carbamoyl phosphate synthetic domain" evidence="1">
    <location>
        <begin position="547"/>
        <end position="929"/>
    </location>
</feature>
<feature type="region of interest" description="Allosteric domain" evidence="1">
    <location>
        <begin position="930"/>
        <end position="1072"/>
    </location>
</feature>
<feature type="binding site" evidence="1">
    <location>
        <position position="129"/>
    </location>
    <ligand>
        <name>ATP</name>
        <dbReference type="ChEBI" id="CHEBI:30616"/>
        <label>1</label>
    </ligand>
</feature>
<feature type="binding site" evidence="1">
    <location>
        <position position="169"/>
    </location>
    <ligand>
        <name>ATP</name>
        <dbReference type="ChEBI" id="CHEBI:30616"/>
        <label>1</label>
    </ligand>
</feature>
<feature type="binding site" evidence="1">
    <location>
        <position position="175"/>
    </location>
    <ligand>
        <name>ATP</name>
        <dbReference type="ChEBI" id="CHEBI:30616"/>
        <label>1</label>
    </ligand>
</feature>
<feature type="binding site" evidence="1">
    <location>
        <position position="176"/>
    </location>
    <ligand>
        <name>ATP</name>
        <dbReference type="ChEBI" id="CHEBI:30616"/>
        <label>1</label>
    </ligand>
</feature>
<feature type="binding site" evidence="1">
    <location>
        <position position="208"/>
    </location>
    <ligand>
        <name>ATP</name>
        <dbReference type="ChEBI" id="CHEBI:30616"/>
        <label>1</label>
    </ligand>
</feature>
<feature type="binding site" evidence="1">
    <location>
        <position position="210"/>
    </location>
    <ligand>
        <name>ATP</name>
        <dbReference type="ChEBI" id="CHEBI:30616"/>
        <label>1</label>
    </ligand>
</feature>
<feature type="binding site" evidence="1">
    <location>
        <position position="215"/>
    </location>
    <ligand>
        <name>ATP</name>
        <dbReference type="ChEBI" id="CHEBI:30616"/>
        <label>1</label>
    </ligand>
</feature>
<feature type="binding site" evidence="1">
    <location>
        <position position="241"/>
    </location>
    <ligand>
        <name>ATP</name>
        <dbReference type="ChEBI" id="CHEBI:30616"/>
        <label>1</label>
    </ligand>
</feature>
<feature type="binding site" evidence="1">
    <location>
        <position position="242"/>
    </location>
    <ligand>
        <name>ATP</name>
        <dbReference type="ChEBI" id="CHEBI:30616"/>
        <label>1</label>
    </ligand>
</feature>
<feature type="binding site" evidence="1">
    <location>
        <position position="243"/>
    </location>
    <ligand>
        <name>ATP</name>
        <dbReference type="ChEBI" id="CHEBI:30616"/>
        <label>1</label>
    </ligand>
</feature>
<feature type="binding site" evidence="1">
    <location>
        <position position="284"/>
    </location>
    <ligand>
        <name>ATP</name>
        <dbReference type="ChEBI" id="CHEBI:30616"/>
        <label>1</label>
    </ligand>
</feature>
<feature type="binding site" evidence="1">
    <location>
        <position position="284"/>
    </location>
    <ligand>
        <name>Mg(2+)</name>
        <dbReference type="ChEBI" id="CHEBI:18420"/>
        <label>1</label>
    </ligand>
</feature>
<feature type="binding site" evidence="1">
    <location>
        <position position="284"/>
    </location>
    <ligand>
        <name>Mn(2+)</name>
        <dbReference type="ChEBI" id="CHEBI:29035"/>
        <label>1</label>
    </ligand>
</feature>
<feature type="binding site" evidence="1">
    <location>
        <position position="298"/>
    </location>
    <ligand>
        <name>ATP</name>
        <dbReference type="ChEBI" id="CHEBI:30616"/>
        <label>1</label>
    </ligand>
</feature>
<feature type="binding site" evidence="1">
    <location>
        <position position="298"/>
    </location>
    <ligand>
        <name>Mg(2+)</name>
        <dbReference type="ChEBI" id="CHEBI:18420"/>
        <label>1</label>
    </ligand>
</feature>
<feature type="binding site" evidence="1">
    <location>
        <position position="298"/>
    </location>
    <ligand>
        <name>Mg(2+)</name>
        <dbReference type="ChEBI" id="CHEBI:18420"/>
        <label>2</label>
    </ligand>
</feature>
<feature type="binding site" evidence="1">
    <location>
        <position position="298"/>
    </location>
    <ligand>
        <name>Mn(2+)</name>
        <dbReference type="ChEBI" id="CHEBI:29035"/>
        <label>1</label>
    </ligand>
</feature>
<feature type="binding site" evidence="1">
    <location>
        <position position="298"/>
    </location>
    <ligand>
        <name>Mn(2+)</name>
        <dbReference type="ChEBI" id="CHEBI:29035"/>
        <label>2</label>
    </ligand>
</feature>
<feature type="binding site" evidence="1">
    <location>
        <position position="300"/>
    </location>
    <ligand>
        <name>Mg(2+)</name>
        <dbReference type="ChEBI" id="CHEBI:18420"/>
        <label>2</label>
    </ligand>
</feature>
<feature type="binding site" evidence="1">
    <location>
        <position position="300"/>
    </location>
    <ligand>
        <name>Mn(2+)</name>
        <dbReference type="ChEBI" id="CHEBI:29035"/>
        <label>2</label>
    </ligand>
</feature>
<feature type="binding site" evidence="1">
    <location>
        <position position="707"/>
    </location>
    <ligand>
        <name>ATP</name>
        <dbReference type="ChEBI" id="CHEBI:30616"/>
        <label>2</label>
    </ligand>
</feature>
<feature type="binding site" evidence="1">
    <location>
        <position position="746"/>
    </location>
    <ligand>
        <name>ATP</name>
        <dbReference type="ChEBI" id="CHEBI:30616"/>
        <label>2</label>
    </ligand>
</feature>
<feature type="binding site" evidence="1">
    <location>
        <position position="752"/>
    </location>
    <ligand>
        <name>ATP</name>
        <dbReference type="ChEBI" id="CHEBI:30616"/>
        <label>2</label>
    </ligand>
</feature>
<feature type="binding site" evidence="1">
    <location>
        <position position="777"/>
    </location>
    <ligand>
        <name>ATP</name>
        <dbReference type="ChEBI" id="CHEBI:30616"/>
        <label>2</label>
    </ligand>
</feature>
<feature type="binding site" evidence="1">
    <location>
        <position position="778"/>
    </location>
    <ligand>
        <name>ATP</name>
        <dbReference type="ChEBI" id="CHEBI:30616"/>
        <label>2</label>
    </ligand>
</feature>
<feature type="binding site" evidence="1">
    <location>
        <position position="779"/>
    </location>
    <ligand>
        <name>ATP</name>
        <dbReference type="ChEBI" id="CHEBI:30616"/>
        <label>2</label>
    </ligand>
</feature>
<feature type="binding site" evidence="1">
    <location>
        <position position="780"/>
    </location>
    <ligand>
        <name>ATP</name>
        <dbReference type="ChEBI" id="CHEBI:30616"/>
        <label>2</label>
    </ligand>
</feature>
<feature type="binding site" evidence="1">
    <location>
        <position position="820"/>
    </location>
    <ligand>
        <name>ATP</name>
        <dbReference type="ChEBI" id="CHEBI:30616"/>
        <label>2</label>
    </ligand>
</feature>
<feature type="binding site" evidence="1">
    <location>
        <position position="820"/>
    </location>
    <ligand>
        <name>Mg(2+)</name>
        <dbReference type="ChEBI" id="CHEBI:18420"/>
        <label>3</label>
    </ligand>
</feature>
<feature type="binding site" evidence="1">
    <location>
        <position position="820"/>
    </location>
    <ligand>
        <name>Mn(2+)</name>
        <dbReference type="ChEBI" id="CHEBI:29035"/>
        <label>3</label>
    </ligand>
</feature>
<feature type="binding site" evidence="1">
    <location>
        <position position="832"/>
    </location>
    <ligand>
        <name>ATP</name>
        <dbReference type="ChEBI" id="CHEBI:30616"/>
        <label>2</label>
    </ligand>
</feature>
<feature type="binding site" evidence="1">
    <location>
        <position position="832"/>
    </location>
    <ligand>
        <name>Mg(2+)</name>
        <dbReference type="ChEBI" id="CHEBI:18420"/>
        <label>3</label>
    </ligand>
</feature>
<feature type="binding site" evidence="1">
    <location>
        <position position="832"/>
    </location>
    <ligand>
        <name>Mg(2+)</name>
        <dbReference type="ChEBI" id="CHEBI:18420"/>
        <label>4</label>
    </ligand>
</feature>
<feature type="binding site" evidence="1">
    <location>
        <position position="832"/>
    </location>
    <ligand>
        <name>Mn(2+)</name>
        <dbReference type="ChEBI" id="CHEBI:29035"/>
        <label>3</label>
    </ligand>
</feature>
<feature type="binding site" evidence="1">
    <location>
        <position position="832"/>
    </location>
    <ligand>
        <name>Mn(2+)</name>
        <dbReference type="ChEBI" id="CHEBI:29035"/>
        <label>4</label>
    </ligand>
</feature>
<feature type="binding site" evidence="1">
    <location>
        <position position="834"/>
    </location>
    <ligand>
        <name>Mg(2+)</name>
        <dbReference type="ChEBI" id="CHEBI:18420"/>
        <label>4</label>
    </ligand>
</feature>
<feature type="binding site" evidence="1">
    <location>
        <position position="834"/>
    </location>
    <ligand>
        <name>Mn(2+)</name>
        <dbReference type="ChEBI" id="CHEBI:29035"/>
        <label>4</label>
    </ligand>
</feature>
<dbReference type="EC" id="6.3.4.16" evidence="1"/>
<dbReference type="EC" id="6.3.5.5" evidence="1"/>
<dbReference type="EMBL" id="CP001177">
    <property type="protein sequence ID" value="ACJ81572.1"/>
    <property type="molecule type" value="Genomic_DNA"/>
</dbReference>
<dbReference type="SMR" id="B7HLM0"/>
<dbReference type="KEGG" id="bcr:BCAH187_A3935"/>
<dbReference type="HOGENOM" id="CLU_000513_1_0_9"/>
<dbReference type="UniPathway" id="UPA00068">
    <property type="reaction ID" value="UER00171"/>
</dbReference>
<dbReference type="UniPathway" id="UPA00070">
    <property type="reaction ID" value="UER00115"/>
</dbReference>
<dbReference type="Proteomes" id="UP000002214">
    <property type="component" value="Chromosome"/>
</dbReference>
<dbReference type="GO" id="GO:0005737">
    <property type="term" value="C:cytoplasm"/>
    <property type="evidence" value="ECO:0007669"/>
    <property type="project" value="TreeGrafter"/>
</dbReference>
<dbReference type="GO" id="GO:0005524">
    <property type="term" value="F:ATP binding"/>
    <property type="evidence" value="ECO:0007669"/>
    <property type="project" value="UniProtKB-UniRule"/>
</dbReference>
<dbReference type="GO" id="GO:0004087">
    <property type="term" value="F:carbamoyl-phosphate synthase (ammonia) activity"/>
    <property type="evidence" value="ECO:0007669"/>
    <property type="project" value="RHEA"/>
</dbReference>
<dbReference type="GO" id="GO:0004088">
    <property type="term" value="F:carbamoyl-phosphate synthase (glutamine-hydrolyzing) activity"/>
    <property type="evidence" value="ECO:0007669"/>
    <property type="project" value="UniProtKB-UniRule"/>
</dbReference>
<dbReference type="GO" id="GO:0046872">
    <property type="term" value="F:metal ion binding"/>
    <property type="evidence" value="ECO:0007669"/>
    <property type="project" value="UniProtKB-KW"/>
</dbReference>
<dbReference type="GO" id="GO:0044205">
    <property type="term" value="P:'de novo' UMP biosynthetic process"/>
    <property type="evidence" value="ECO:0007669"/>
    <property type="project" value="UniProtKB-UniRule"/>
</dbReference>
<dbReference type="GO" id="GO:0006541">
    <property type="term" value="P:glutamine metabolic process"/>
    <property type="evidence" value="ECO:0007669"/>
    <property type="project" value="TreeGrafter"/>
</dbReference>
<dbReference type="GO" id="GO:0006526">
    <property type="term" value="P:L-arginine biosynthetic process"/>
    <property type="evidence" value="ECO:0007669"/>
    <property type="project" value="UniProtKB-UniRule"/>
</dbReference>
<dbReference type="CDD" id="cd01424">
    <property type="entry name" value="MGS_CPS_II"/>
    <property type="match status" value="1"/>
</dbReference>
<dbReference type="FunFam" id="1.10.1030.10:FF:000002">
    <property type="entry name" value="Carbamoyl-phosphate synthase large chain"/>
    <property type="match status" value="1"/>
</dbReference>
<dbReference type="FunFam" id="3.30.1490.20:FF:000001">
    <property type="entry name" value="Carbamoyl-phosphate synthase large chain"/>
    <property type="match status" value="1"/>
</dbReference>
<dbReference type="FunFam" id="3.30.470.20:FF:000001">
    <property type="entry name" value="Carbamoyl-phosphate synthase large chain"/>
    <property type="match status" value="1"/>
</dbReference>
<dbReference type="FunFam" id="3.30.470.20:FF:000026">
    <property type="entry name" value="Carbamoyl-phosphate synthase large chain"/>
    <property type="match status" value="1"/>
</dbReference>
<dbReference type="FunFam" id="3.40.50.1380:FF:000011">
    <property type="entry name" value="Carbamoyl-phosphate synthase large chain"/>
    <property type="match status" value="1"/>
</dbReference>
<dbReference type="FunFam" id="3.40.50.20:FF:000001">
    <property type="entry name" value="Carbamoyl-phosphate synthase large chain"/>
    <property type="match status" value="2"/>
</dbReference>
<dbReference type="Gene3D" id="3.40.50.20">
    <property type="match status" value="2"/>
</dbReference>
<dbReference type="Gene3D" id="3.30.1490.20">
    <property type="entry name" value="ATP-grasp fold, A domain"/>
    <property type="match status" value="1"/>
</dbReference>
<dbReference type="Gene3D" id="3.30.470.20">
    <property type="entry name" value="ATP-grasp fold, B domain"/>
    <property type="match status" value="2"/>
</dbReference>
<dbReference type="Gene3D" id="1.10.1030.10">
    <property type="entry name" value="Carbamoyl-phosphate synthetase, large subunit oligomerisation domain"/>
    <property type="match status" value="1"/>
</dbReference>
<dbReference type="Gene3D" id="3.40.50.1380">
    <property type="entry name" value="Methylglyoxal synthase-like domain"/>
    <property type="match status" value="1"/>
</dbReference>
<dbReference type="HAMAP" id="MF_01210_A">
    <property type="entry name" value="CPSase_L_chain_A"/>
    <property type="match status" value="1"/>
</dbReference>
<dbReference type="HAMAP" id="MF_01210_B">
    <property type="entry name" value="CPSase_L_chain_B"/>
    <property type="match status" value="1"/>
</dbReference>
<dbReference type="InterPro" id="IPR011761">
    <property type="entry name" value="ATP-grasp"/>
</dbReference>
<dbReference type="InterPro" id="IPR013815">
    <property type="entry name" value="ATP_grasp_subdomain_1"/>
</dbReference>
<dbReference type="InterPro" id="IPR006275">
    <property type="entry name" value="CarbamoylP_synth_lsu"/>
</dbReference>
<dbReference type="InterPro" id="IPR005480">
    <property type="entry name" value="CarbamoylP_synth_lsu_oligo"/>
</dbReference>
<dbReference type="InterPro" id="IPR036897">
    <property type="entry name" value="CarbamoylP_synth_lsu_oligo_sf"/>
</dbReference>
<dbReference type="InterPro" id="IPR005479">
    <property type="entry name" value="CbamoylP_synth_lsu-like_ATP-bd"/>
</dbReference>
<dbReference type="InterPro" id="IPR005483">
    <property type="entry name" value="CbamoylP_synth_lsu_CPSase_dom"/>
</dbReference>
<dbReference type="InterPro" id="IPR011607">
    <property type="entry name" value="MGS-like_dom"/>
</dbReference>
<dbReference type="InterPro" id="IPR036914">
    <property type="entry name" value="MGS-like_dom_sf"/>
</dbReference>
<dbReference type="InterPro" id="IPR033937">
    <property type="entry name" value="MGS_CPS_CarB"/>
</dbReference>
<dbReference type="InterPro" id="IPR016185">
    <property type="entry name" value="PreATP-grasp_dom_sf"/>
</dbReference>
<dbReference type="NCBIfam" id="TIGR01369">
    <property type="entry name" value="CPSaseII_lrg"/>
    <property type="match status" value="1"/>
</dbReference>
<dbReference type="NCBIfam" id="NF003671">
    <property type="entry name" value="PRK05294.1"/>
    <property type="match status" value="1"/>
</dbReference>
<dbReference type="NCBIfam" id="NF009455">
    <property type="entry name" value="PRK12815.1"/>
    <property type="match status" value="1"/>
</dbReference>
<dbReference type="PANTHER" id="PTHR11405:SF53">
    <property type="entry name" value="CARBAMOYL-PHOSPHATE SYNTHASE [AMMONIA], MITOCHONDRIAL"/>
    <property type="match status" value="1"/>
</dbReference>
<dbReference type="PANTHER" id="PTHR11405">
    <property type="entry name" value="CARBAMOYLTRANSFERASE FAMILY MEMBER"/>
    <property type="match status" value="1"/>
</dbReference>
<dbReference type="Pfam" id="PF02786">
    <property type="entry name" value="CPSase_L_D2"/>
    <property type="match status" value="2"/>
</dbReference>
<dbReference type="Pfam" id="PF02787">
    <property type="entry name" value="CPSase_L_D3"/>
    <property type="match status" value="1"/>
</dbReference>
<dbReference type="Pfam" id="PF02142">
    <property type="entry name" value="MGS"/>
    <property type="match status" value="1"/>
</dbReference>
<dbReference type="PRINTS" id="PR00098">
    <property type="entry name" value="CPSASE"/>
</dbReference>
<dbReference type="SMART" id="SM01096">
    <property type="entry name" value="CPSase_L_D3"/>
    <property type="match status" value="1"/>
</dbReference>
<dbReference type="SMART" id="SM01209">
    <property type="entry name" value="GARS_A"/>
    <property type="match status" value="1"/>
</dbReference>
<dbReference type="SMART" id="SM00851">
    <property type="entry name" value="MGS"/>
    <property type="match status" value="1"/>
</dbReference>
<dbReference type="SUPFAM" id="SSF48108">
    <property type="entry name" value="Carbamoyl phosphate synthetase, large subunit connection domain"/>
    <property type="match status" value="1"/>
</dbReference>
<dbReference type="SUPFAM" id="SSF56059">
    <property type="entry name" value="Glutathione synthetase ATP-binding domain-like"/>
    <property type="match status" value="2"/>
</dbReference>
<dbReference type="SUPFAM" id="SSF52335">
    <property type="entry name" value="Methylglyoxal synthase-like"/>
    <property type="match status" value="1"/>
</dbReference>
<dbReference type="SUPFAM" id="SSF52440">
    <property type="entry name" value="PreATP-grasp domain"/>
    <property type="match status" value="2"/>
</dbReference>
<dbReference type="PROSITE" id="PS50975">
    <property type="entry name" value="ATP_GRASP"/>
    <property type="match status" value="2"/>
</dbReference>
<dbReference type="PROSITE" id="PS00866">
    <property type="entry name" value="CPSASE_1"/>
    <property type="match status" value="2"/>
</dbReference>
<dbReference type="PROSITE" id="PS00867">
    <property type="entry name" value="CPSASE_2"/>
    <property type="match status" value="2"/>
</dbReference>
<dbReference type="PROSITE" id="PS51855">
    <property type="entry name" value="MGS"/>
    <property type="match status" value="1"/>
</dbReference>
<name>CARB_BACC7</name>
<accession>B7HLM0</accession>
<proteinExistence type="inferred from homology"/>
<reference key="1">
    <citation type="submission" date="2008-10" db="EMBL/GenBank/DDBJ databases">
        <title>Genome sequence of Bacillus cereus AH187.</title>
        <authorList>
            <person name="Dodson R.J."/>
            <person name="Durkin A.S."/>
            <person name="Rosovitz M.J."/>
            <person name="Rasko D.A."/>
            <person name="Kolsto A.B."/>
            <person name="Okstad O.A."/>
            <person name="Ravel J."/>
            <person name="Sutton G."/>
        </authorList>
    </citation>
    <scope>NUCLEOTIDE SEQUENCE [LARGE SCALE GENOMIC DNA]</scope>
    <source>
        <strain>AH187</strain>
    </source>
</reference>
<organism>
    <name type="scientific">Bacillus cereus (strain AH187)</name>
    <dbReference type="NCBI Taxonomy" id="405534"/>
    <lineage>
        <taxon>Bacteria</taxon>
        <taxon>Bacillati</taxon>
        <taxon>Bacillota</taxon>
        <taxon>Bacilli</taxon>
        <taxon>Bacillales</taxon>
        <taxon>Bacillaceae</taxon>
        <taxon>Bacillus</taxon>
        <taxon>Bacillus cereus group</taxon>
    </lineage>
</organism>
<gene>
    <name evidence="1" type="primary">carB</name>
    <name type="ordered locus">BCAH187_A3935</name>
</gene>
<keyword id="KW-0028">Amino-acid biosynthesis</keyword>
<keyword id="KW-0055">Arginine biosynthesis</keyword>
<keyword id="KW-0067">ATP-binding</keyword>
<keyword id="KW-0436">Ligase</keyword>
<keyword id="KW-0460">Magnesium</keyword>
<keyword id="KW-0464">Manganese</keyword>
<keyword id="KW-0479">Metal-binding</keyword>
<keyword id="KW-0547">Nucleotide-binding</keyword>
<keyword id="KW-0665">Pyrimidine biosynthesis</keyword>
<keyword id="KW-0677">Repeat</keyword>